<keyword id="KW-0004">4Fe-4S</keyword>
<keyword id="KW-0963">Cytoplasm</keyword>
<keyword id="KW-0408">Iron</keyword>
<keyword id="KW-0411">Iron-sulfur</keyword>
<keyword id="KW-0479">Metal-binding</keyword>
<keyword id="KW-0662">Pyridine nucleotide biosynthesis</keyword>
<keyword id="KW-1185">Reference proteome</keyword>
<keyword id="KW-0808">Transferase</keyword>
<feature type="chain" id="PRO_0000155789" description="Quinolinate synthase">
    <location>
        <begin position="1"/>
        <end position="324"/>
    </location>
</feature>
<feature type="binding site" evidence="1">
    <location>
        <position position="44"/>
    </location>
    <ligand>
        <name>iminosuccinate</name>
        <dbReference type="ChEBI" id="CHEBI:77875"/>
    </ligand>
</feature>
<feature type="binding site" evidence="1">
    <location>
        <position position="62"/>
    </location>
    <ligand>
        <name>iminosuccinate</name>
        <dbReference type="ChEBI" id="CHEBI:77875"/>
    </ligand>
</feature>
<feature type="binding site" evidence="1">
    <location>
        <position position="107"/>
    </location>
    <ligand>
        <name>[4Fe-4S] cluster</name>
        <dbReference type="ChEBI" id="CHEBI:49883"/>
    </ligand>
</feature>
<feature type="binding site" evidence="1">
    <location>
        <begin position="133"/>
        <end position="135"/>
    </location>
    <ligand>
        <name>iminosuccinate</name>
        <dbReference type="ChEBI" id="CHEBI:77875"/>
    </ligand>
</feature>
<feature type="binding site" evidence="1">
    <location>
        <position position="150"/>
    </location>
    <ligand>
        <name>iminosuccinate</name>
        <dbReference type="ChEBI" id="CHEBI:77875"/>
    </ligand>
</feature>
<feature type="binding site" evidence="1">
    <location>
        <position position="192"/>
    </location>
    <ligand>
        <name>[4Fe-4S] cluster</name>
        <dbReference type="ChEBI" id="CHEBI:49883"/>
    </ligand>
</feature>
<feature type="binding site" evidence="1">
    <location>
        <begin position="218"/>
        <end position="220"/>
    </location>
    <ligand>
        <name>iminosuccinate</name>
        <dbReference type="ChEBI" id="CHEBI:77875"/>
    </ligand>
</feature>
<feature type="binding site" evidence="1">
    <location>
        <position position="235"/>
    </location>
    <ligand>
        <name>iminosuccinate</name>
        <dbReference type="ChEBI" id="CHEBI:77875"/>
    </ligand>
</feature>
<feature type="binding site" evidence="1">
    <location>
        <position position="278"/>
    </location>
    <ligand>
        <name>[4Fe-4S] cluster</name>
        <dbReference type="ChEBI" id="CHEBI:49883"/>
    </ligand>
</feature>
<gene>
    <name evidence="1" type="primary">nadA</name>
    <name type="ordered locus">LA_0618</name>
</gene>
<name>NADA_LEPIN</name>
<evidence type="ECO:0000255" key="1">
    <source>
        <dbReference type="HAMAP-Rule" id="MF_00568"/>
    </source>
</evidence>
<dbReference type="EC" id="2.5.1.72" evidence="1"/>
<dbReference type="EMBL" id="AE010300">
    <property type="protein sequence ID" value="AAN47817.2"/>
    <property type="molecule type" value="Genomic_DNA"/>
</dbReference>
<dbReference type="RefSeq" id="NP_710799.2">
    <property type="nucleotide sequence ID" value="NC_004342.2"/>
</dbReference>
<dbReference type="RefSeq" id="WP_000853488.1">
    <property type="nucleotide sequence ID" value="NC_004342.2"/>
</dbReference>
<dbReference type="SMR" id="Q8F8D9"/>
<dbReference type="FunCoup" id="Q8F8D9">
    <property type="interactions" value="417"/>
</dbReference>
<dbReference type="STRING" id="189518.LA_0618"/>
<dbReference type="PaxDb" id="189518-LA_0618"/>
<dbReference type="EnsemblBacteria" id="AAN47817">
    <property type="protein sequence ID" value="AAN47817"/>
    <property type="gene ID" value="LA_0618"/>
</dbReference>
<dbReference type="GeneID" id="61142842"/>
<dbReference type="KEGG" id="lil:LA_0618"/>
<dbReference type="PATRIC" id="fig|189518.3.peg.619"/>
<dbReference type="HOGENOM" id="CLU_047382_0_0_12"/>
<dbReference type="InParanoid" id="Q8F8D9"/>
<dbReference type="OrthoDB" id="9801204at2"/>
<dbReference type="UniPathway" id="UPA00253">
    <property type="reaction ID" value="UER00327"/>
</dbReference>
<dbReference type="Proteomes" id="UP000001408">
    <property type="component" value="Chromosome I"/>
</dbReference>
<dbReference type="GO" id="GO:0005829">
    <property type="term" value="C:cytosol"/>
    <property type="evidence" value="ECO:0000318"/>
    <property type="project" value="GO_Central"/>
</dbReference>
<dbReference type="GO" id="GO:0051539">
    <property type="term" value="F:4 iron, 4 sulfur cluster binding"/>
    <property type="evidence" value="ECO:0000318"/>
    <property type="project" value="GO_Central"/>
</dbReference>
<dbReference type="GO" id="GO:0046872">
    <property type="term" value="F:metal ion binding"/>
    <property type="evidence" value="ECO:0007669"/>
    <property type="project" value="UniProtKB-KW"/>
</dbReference>
<dbReference type="GO" id="GO:0008987">
    <property type="term" value="F:quinolinate synthetase A activity"/>
    <property type="evidence" value="ECO:0000318"/>
    <property type="project" value="GO_Central"/>
</dbReference>
<dbReference type="GO" id="GO:0034628">
    <property type="term" value="P:'de novo' NAD biosynthetic process from L-aspartate"/>
    <property type="evidence" value="ECO:0000318"/>
    <property type="project" value="GO_Central"/>
</dbReference>
<dbReference type="Gene3D" id="3.40.50.10800">
    <property type="entry name" value="NadA-like"/>
    <property type="match status" value="3"/>
</dbReference>
<dbReference type="HAMAP" id="MF_00568">
    <property type="entry name" value="NadA_type2"/>
    <property type="match status" value="1"/>
</dbReference>
<dbReference type="InterPro" id="IPR003473">
    <property type="entry name" value="NadA"/>
</dbReference>
<dbReference type="InterPro" id="IPR036094">
    <property type="entry name" value="NadA_sf"/>
</dbReference>
<dbReference type="InterPro" id="IPR023066">
    <property type="entry name" value="Quinolinate_synth_type2"/>
</dbReference>
<dbReference type="NCBIfam" id="TIGR00550">
    <property type="entry name" value="nadA"/>
    <property type="match status" value="1"/>
</dbReference>
<dbReference type="NCBIfam" id="NF006878">
    <property type="entry name" value="PRK09375.1-2"/>
    <property type="match status" value="1"/>
</dbReference>
<dbReference type="NCBIfam" id="NF006879">
    <property type="entry name" value="PRK09375.1-4"/>
    <property type="match status" value="1"/>
</dbReference>
<dbReference type="PANTHER" id="PTHR30573:SF0">
    <property type="entry name" value="QUINOLINATE SYNTHASE, CHLOROPLASTIC"/>
    <property type="match status" value="1"/>
</dbReference>
<dbReference type="PANTHER" id="PTHR30573">
    <property type="entry name" value="QUINOLINATE SYNTHETASE A"/>
    <property type="match status" value="1"/>
</dbReference>
<dbReference type="Pfam" id="PF02445">
    <property type="entry name" value="NadA"/>
    <property type="match status" value="1"/>
</dbReference>
<dbReference type="SUPFAM" id="SSF142754">
    <property type="entry name" value="NadA-like"/>
    <property type="match status" value="1"/>
</dbReference>
<organism>
    <name type="scientific">Leptospira interrogans serogroup Icterohaemorrhagiae serovar Lai (strain 56601)</name>
    <dbReference type="NCBI Taxonomy" id="189518"/>
    <lineage>
        <taxon>Bacteria</taxon>
        <taxon>Pseudomonadati</taxon>
        <taxon>Spirochaetota</taxon>
        <taxon>Spirochaetia</taxon>
        <taxon>Leptospirales</taxon>
        <taxon>Leptospiraceae</taxon>
        <taxon>Leptospira</taxon>
    </lineage>
</organism>
<comment type="function">
    <text evidence="1">Catalyzes the condensation of iminoaspartate with dihydroxyacetone phosphate to form quinolinate.</text>
</comment>
<comment type="catalytic activity">
    <reaction evidence="1">
        <text>iminosuccinate + dihydroxyacetone phosphate = quinolinate + phosphate + 2 H2O + H(+)</text>
        <dbReference type="Rhea" id="RHEA:25888"/>
        <dbReference type="ChEBI" id="CHEBI:15377"/>
        <dbReference type="ChEBI" id="CHEBI:15378"/>
        <dbReference type="ChEBI" id="CHEBI:29959"/>
        <dbReference type="ChEBI" id="CHEBI:43474"/>
        <dbReference type="ChEBI" id="CHEBI:57642"/>
        <dbReference type="ChEBI" id="CHEBI:77875"/>
        <dbReference type="EC" id="2.5.1.72"/>
    </reaction>
    <physiologicalReaction direction="left-to-right" evidence="1">
        <dbReference type="Rhea" id="RHEA:25889"/>
    </physiologicalReaction>
</comment>
<comment type="cofactor">
    <cofactor evidence="1">
        <name>[4Fe-4S] cluster</name>
        <dbReference type="ChEBI" id="CHEBI:49883"/>
    </cofactor>
    <text evidence="1">Binds 1 [4Fe-4S] cluster per subunit.</text>
</comment>
<comment type="pathway">
    <text evidence="1">Cofactor biosynthesis; NAD(+) biosynthesis; quinolinate from iminoaspartate: step 1/1.</text>
</comment>
<comment type="subcellular location">
    <subcellularLocation>
        <location evidence="1">Cytoplasm</location>
    </subcellularLocation>
</comment>
<comment type="similarity">
    <text evidence="1">Belongs to the quinolinate synthase family. Type 2 subfamily.</text>
</comment>
<sequence length="324" mass="36561">MKTLEEVAKALKNTYMEHEVDEKLPLIQEIQRLKKEKNAILLGHNYMTPDVFHGVSDITGDSLYLSKVAADTDADVILFNGVHFMAETAKLMSPQKKVLIADLKAGCSLAESITRQDVIDLKQKYPGVPVVTYVNCTADVKAETDICCTSANALQVVESLESDTVIFLPDRYLAANVQNLTQKKIITHPGSCMVHEMYSAEDIELTRRQFPGVTVISHPECKTEVVDRSDYSGSTSQMSDFIRKSEAKNIFLITECSMGDNLRSEFPDRHFVSTCQVCPHMKKITLEKIRDSLLYDQYEIHLDPEVIEKGRMSVQRMLDLSFKK</sequence>
<protein>
    <recommendedName>
        <fullName evidence="1">Quinolinate synthase</fullName>
        <ecNumber evidence="1">2.5.1.72</ecNumber>
    </recommendedName>
</protein>
<proteinExistence type="inferred from homology"/>
<accession>Q8F8D9</accession>
<reference key="1">
    <citation type="journal article" date="2003" name="Nature">
        <title>Unique physiological and pathogenic features of Leptospira interrogans revealed by whole-genome sequencing.</title>
        <authorList>
            <person name="Ren S.-X."/>
            <person name="Fu G."/>
            <person name="Jiang X.-G."/>
            <person name="Zeng R."/>
            <person name="Miao Y.-G."/>
            <person name="Xu H."/>
            <person name="Zhang Y.-X."/>
            <person name="Xiong H."/>
            <person name="Lu G."/>
            <person name="Lu L.-F."/>
            <person name="Jiang H.-Q."/>
            <person name="Jia J."/>
            <person name="Tu Y.-F."/>
            <person name="Jiang J.-X."/>
            <person name="Gu W.-Y."/>
            <person name="Zhang Y.-Q."/>
            <person name="Cai Z."/>
            <person name="Sheng H.-H."/>
            <person name="Yin H.-F."/>
            <person name="Zhang Y."/>
            <person name="Zhu G.-F."/>
            <person name="Wan M."/>
            <person name="Huang H.-L."/>
            <person name="Qian Z."/>
            <person name="Wang S.-Y."/>
            <person name="Ma W."/>
            <person name="Yao Z.-J."/>
            <person name="Shen Y."/>
            <person name="Qiang B.-Q."/>
            <person name="Xia Q.-C."/>
            <person name="Guo X.-K."/>
            <person name="Danchin A."/>
            <person name="Saint Girons I."/>
            <person name="Somerville R.L."/>
            <person name="Wen Y.-M."/>
            <person name="Shi M.-H."/>
            <person name="Chen Z."/>
            <person name="Xu J.-G."/>
            <person name="Zhao G.-P."/>
        </authorList>
    </citation>
    <scope>NUCLEOTIDE SEQUENCE [LARGE SCALE GENOMIC DNA]</scope>
    <source>
        <strain>56601</strain>
    </source>
</reference>